<evidence type="ECO:0000250" key="1">
    <source>
        <dbReference type="UniProtKB" id="Q0CCY3"/>
    </source>
</evidence>
<evidence type="ECO:0000250" key="2">
    <source>
        <dbReference type="UniProtKB" id="Q5B0D0"/>
    </source>
</evidence>
<evidence type="ECO:0000255" key="3"/>
<evidence type="ECO:0000255" key="4">
    <source>
        <dbReference type="PROSITE-ProRule" id="PRU00258"/>
    </source>
</evidence>
<evidence type="ECO:0000255" key="5">
    <source>
        <dbReference type="PROSITE-ProRule" id="PRU01348"/>
    </source>
</evidence>
<evidence type="ECO:0000255" key="6">
    <source>
        <dbReference type="PROSITE-ProRule" id="PRU01363"/>
    </source>
</evidence>
<evidence type="ECO:0000256" key="7">
    <source>
        <dbReference type="SAM" id="MobiDB-lite"/>
    </source>
</evidence>
<evidence type="ECO:0000269" key="8">
    <source>
    </source>
</evidence>
<evidence type="ECO:0000269" key="9">
    <source>
    </source>
</evidence>
<evidence type="ECO:0000269" key="10">
    <source>
    </source>
</evidence>
<evidence type="ECO:0000303" key="11">
    <source>
    </source>
</evidence>
<evidence type="ECO:0000303" key="12">
    <source>
    </source>
</evidence>
<evidence type="ECO:0000305" key="13">
    <source>
    </source>
</evidence>
<evidence type="ECO:0000305" key="14">
    <source>
    </source>
</evidence>
<dbReference type="EC" id="2.3.1.-" evidence="14"/>
<dbReference type="EMBL" id="AAHF01000005">
    <property type="protein sequence ID" value="EAL89339.1"/>
    <property type="molecule type" value="Genomic_DNA"/>
</dbReference>
<dbReference type="RefSeq" id="XP_751377.1">
    <property type="nucleotide sequence ID" value="XM_746284.1"/>
</dbReference>
<dbReference type="SMR" id="Q4WQZ5"/>
<dbReference type="STRING" id="330879.Q4WQZ5"/>
<dbReference type="EnsemblFungi" id="EAL89339">
    <property type="protein sequence ID" value="EAL89339"/>
    <property type="gene ID" value="AFUA_4G14560"/>
</dbReference>
<dbReference type="GeneID" id="3509595"/>
<dbReference type="KEGG" id="afm:AFUA_4G14560"/>
<dbReference type="VEuPathDB" id="FungiDB:Afu4g14560"/>
<dbReference type="eggNOG" id="KOG1202">
    <property type="taxonomic scope" value="Eukaryota"/>
</dbReference>
<dbReference type="HOGENOM" id="CLU_000022_6_1_1"/>
<dbReference type="InParanoid" id="Q4WQZ5"/>
<dbReference type="OMA" id="AAYGHKM"/>
<dbReference type="OrthoDB" id="329835at2759"/>
<dbReference type="PHI-base" id="PHI:10463"/>
<dbReference type="Proteomes" id="UP000002530">
    <property type="component" value="Chromosome 4"/>
</dbReference>
<dbReference type="GO" id="GO:0004315">
    <property type="term" value="F:3-oxoacyl-[acyl-carrier-protein] synthase activity"/>
    <property type="evidence" value="ECO:0007669"/>
    <property type="project" value="InterPro"/>
</dbReference>
<dbReference type="GO" id="GO:0004312">
    <property type="term" value="F:fatty acid synthase activity"/>
    <property type="evidence" value="ECO:0000318"/>
    <property type="project" value="GO_Central"/>
</dbReference>
<dbReference type="GO" id="GO:0031177">
    <property type="term" value="F:phosphopantetheine binding"/>
    <property type="evidence" value="ECO:0007669"/>
    <property type="project" value="InterPro"/>
</dbReference>
<dbReference type="GO" id="GO:0006633">
    <property type="term" value="P:fatty acid biosynthetic process"/>
    <property type="evidence" value="ECO:0000318"/>
    <property type="project" value="GO_Central"/>
</dbReference>
<dbReference type="GO" id="GO:0019748">
    <property type="term" value="P:secondary metabolic process"/>
    <property type="evidence" value="ECO:0000303"/>
    <property type="project" value="AspGD"/>
</dbReference>
<dbReference type="GO" id="GO:0044550">
    <property type="term" value="P:secondary metabolite biosynthetic process"/>
    <property type="evidence" value="ECO:0000315"/>
    <property type="project" value="AspGD"/>
</dbReference>
<dbReference type="CDD" id="cd00833">
    <property type="entry name" value="PKS"/>
    <property type="match status" value="1"/>
</dbReference>
<dbReference type="FunFam" id="3.40.366.10:FF:000017">
    <property type="entry name" value="Non-reducing polyketide synthase aptA"/>
    <property type="match status" value="1"/>
</dbReference>
<dbReference type="FunFam" id="3.40.366.10:FF:000002">
    <property type="entry name" value="Probable polyketide synthase 2"/>
    <property type="match status" value="1"/>
</dbReference>
<dbReference type="FunFam" id="1.10.1200.10:FF:000011">
    <property type="entry name" value="Sterigmatocystin biosynthesis polyketide synthase"/>
    <property type="match status" value="1"/>
</dbReference>
<dbReference type="FunFam" id="3.10.129.110:FF:000001">
    <property type="entry name" value="Sterigmatocystin biosynthesis polyketide synthase"/>
    <property type="match status" value="1"/>
</dbReference>
<dbReference type="FunFam" id="3.40.47.10:FF:000031">
    <property type="entry name" value="Sterigmatocystin biosynthesis polyketide synthase"/>
    <property type="match status" value="1"/>
</dbReference>
<dbReference type="Gene3D" id="3.30.70.3290">
    <property type="match status" value="1"/>
</dbReference>
<dbReference type="Gene3D" id="3.40.47.10">
    <property type="match status" value="1"/>
</dbReference>
<dbReference type="Gene3D" id="1.10.1200.10">
    <property type="entry name" value="ACP-like"/>
    <property type="match status" value="1"/>
</dbReference>
<dbReference type="Gene3D" id="3.40.366.10">
    <property type="entry name" value="Malonyl-Coenzyme A Acyl Carrier Protein, domain 2"/>
    <property type="match status" value="2"/>
</dbReference>
<dbReference type="Gene3D" id="3.10.129.110">
    <property type="entry name" value="Polyketide synthase dehydratase"/>
    <property type="match status" value="1"/>
</dbReference>
<dbReference type="InterPro" id="IPR001227">
    <property type="entry name" value="Ac_transferase_dom_sf"/>
</dbReference>
<dbReference type="InterPro" id="IPR036736">
    <property type="entry name" value="ACP-like_sf"/>
</dbReference>
<dbReference type="InterPro" id="IPR014043">
    <property type="entry name" value="Acyl_transferase_dom"/>
</dbReference>
<dbReference type="InterPro" id="IPR016035">
    <property type="entry name" value="Acyl_Trfase/lysoPLipase"/>
</dbReference>
<dbReference type="InterPro" id="IPR018201">
    <property type="entry name" value="Ketoacyl_synth_AS"/>
</dbReference>
<dbReference type="InterPro" id="IPR014031">
    <property type="entry name" value="Ketoacyl_synth_C"/>
</dbReference>
<dbReference type="InterPro" id="IPR014030">
    <property type="entry name" value="Ketoacyl_synth_N"/>
</dbReference>
<dbReference type="InterPro" id="IPR016036">
    <property type="entry name" value="Malonyl_transacylase_ACP-bd"/>
</dbReference>
<dbReference type="InterPro" id="IPR020841">
    <property type="entry name" value="PKS_Beta-ketoAc_synthase_dom"/>
</dbReference>
<dbReference type="InterPro" id="IPR042104">
    <property type="entry name" value="PKS_dehydratase_sf"/>
</dbReference>
<dbReference type="InterPro" id="IPR049900">
    <property type="entry name" value="PKS_mFAS_DH"/>
</dbReference>
<dbReference type="InterPro" id="IPR050091">
    <property type="entry name" value="PKS_NRPS_Biosynth_Enz"/>
</dbReference>
<dbReference type="InterPro" id="IPR020806">
    <property type="entry name" value="PKS_PP-bd"/>
</dbReference>
<dbReference type="InterPro" id="IPR009081">
    <property type="entry name" value="PP-bd_ACP"/>
</dbReference>
<dbReference type="InterPro" id="IPR030918">
    <property type="entry name" value="PT_fungal_PKS"/>
</dbReference>
<dbReference type="InterPro" id="IPR032088">
    <property type="entry name" value="SAT"/>
</dbReference>
<dbReference type="InterPro" id="IPR016039">
    <property type="entry name" value="Thiolase-like"/>
</dbReference>
<dbReference type="NCBIfam" id="TIGR04532">
    <property type="entry name" value="PT_fungal_PKS"/>
    <property type="match status" value="1"/>
</dbReference>
<dbReference type="PANTHER" id="PTHR43775">
    <property type="entry name" value="FATTY ACID SYNTHASE"/>
    <property type="match status" value="1"/>
</dbReference>
<dbReference type="PANTHER" id="PTHR43775:SF37">
    <property type="entry name" value="SI:DKEY-61P9.11"/>
    <property type="match status" value="1"/>
</dbReference>
<dbReference type="Pfam" id="PF00698">
    <property type="entry name" value="Acyl_transf_1"/>
    <property type="match status" value="1"/>
</dbReference>
<dbReference type="Pfam" id="PF22621">
    <property type="entry name" value="CurL-like_PKS_C"/>
    <property type="match status" value="1"/>
</dbReference>
<dbReference type="Pfam" id="PF00109">
    <property type="entry name" value="ketoacyl-synt"/>
    <property type="match status" value="1"/>
</dbReference>
<dbReference type="Pfam" id="PF02801">
    <property type="entry name" value="Ketoacyl-synt_C"/>
    <property type="match status" value="1"/>
</dbReference>
<dbReference type="Pfam" id="PF00550">
    <property type="entry name" value="PP-binding"/>
    <property type="match status" value="1"/>
</dbReference>
<dbReference type="Pfam" id="PF16073">
    <property type="entry name" value="SAT"/>
    <property type="match status" value="1"/>
</dbReference>
<dbReference type="SMART" id="SM00827">
    <property type="entry name" value="PKS_AT"/>
    <property type="match status" value="1"/>
</dbReference>
<dbReference type="SMART" id="SM00825">
    <property type="entry name" value="PKS_KS"/>
    <property type="match status" value="1"/>
</dbReference>
<dbReference type="SMART" id="SM00823">
    <property type="entry name" value="PKS_PP"/>
    <property type="match status" value="1"/>
</dbReference>
<dbReference type="SUPFAM" id="SSF47336">
    <property type="entry name" value="ACP-like"/>
    <property type="match status" value="1"/>
</dbReference>
<dbReference type="SUPFAM" id="SSF52151">
    <property type="entry name" value="FabD/lysophospholipase-like"/>
    <property type="match status" value="1"/>
</dbReference>
<dbReference type="SUPFAM" id="SSF55048">
    <property type="entry name" value="Probable ACP-binding domain of malonyl-CoA ACP transacylase"/>
    <property type="match status" value="1"/>
</dbReference>
<dbReference type="SUPFAM" id="SSF53901">
    <property type="entry name" value="Thiolase-like"/>
    <property type="match status" value="1"/>
</dbReference>
<dbReference type="PROSITE" id="PS50075">
    <property type="entry name" value="CARRIER"/>
    <property type="match status" value="1"/>
</dbReference>
<dbReference type="PROSITE" id="PS00606">
    <property type="entry name" value="KS3_1"/>
    <property type="match status" value="1"/>
</dbReference>
<dbReference type="PROSITE" id="PS52004">
    <property type="entry name" value="KS3_2"/>
    <property type="match status" value="1"/>
</dbReference>
<dbReference type="PROSITE" id="PS52019">
    <property type="entry name" value="PKS_MFAS_DH"/>
    <property type="match status" value="1"/>
</dbReference>
<organism>
    <name type="scientific">Aspergillus fumigatus (strain ATCC MYA-4609 / CBS 101355 / FGSC A1100 / Af293)</name>
    <name type="common">Neosartorya fumigata</name>
    <dbReference type="NCBI Taxonomy" id="330879"/>
    <lineage>
        <taxon>Eukaryota</taxon>
        <taxon>Fungi</taxon>
        <taxon>Dikarya</taxon>
        <taxon>Ascomycota</taxon>
        <taxon>Pezizomycotina</taxon>
        <taxon>Eurotiomycetes</taxon>
        <taxon>Eurotiomycetidae</taxon>
        <taxon>Eurotiales</taxon>
        <taxon>Aspergillaceae</taxon>
        <taxon>Aspergillus</taxon>
        <taxon>Aspergillus subgen. Fumigati</taxon>
    </lineage>
</organism>
<keyword id="KW-0511">Multifunctional enzyme</keyword>
<keyword id="KW-0596">Phosphopantetheine</keyword>
<keyword id="KW-0597">Phosphoprotein</keyword>
<keyword id="KW-1185">Reference proteome</keyword>
<keyword id="KW-0808">Transferase</keyword>
<reference key="1">
    <citation type="journal article" date="2005" name="Nature">
        <title>Genomic sequence of the pathogenic and allergenic filamentous fungus Aspergillus fumigatus.</title>
        <authorList>
            <person name="Nierman W.C."/>
            <person name="Pain A."/>
            <person name="Anderson M.J."/>
            <person name="Wortman J.R."/>
            <person name="Kim H.S."/>
            <person name="Arroyo J."/>
            <person name="Berriman M."/>
            <person name="Abe K."/>
            <person name="Archer D.B."/>
            <person name="Bermejo C."/>
            <person name="Bennett J.W."/>
            <person name="Bowyer P."/>
            <person name="Chen D."/>
            <person name="Collins M."/>
            <person name="Coulsen R."/>
            <person name="Davies R."/>
            <person name="Dyer P.S."/>
            <person name="Farman M.L."/>
            <person name="Fedorova N."/>
            <person name="Fedorova N.D."/>
            <person name="Feldblyum T.V."/>
            <person name="Fischer R."/>
            <person name="Fosker N."/>
            <person name="Fraser A."/>
            <person name="Garcia J.L."/>
            <person name="Garcia M.J."/>
            <person name="Goble A."/>
            <person name="Goldman G.H."/>
            <person name="Gomi K."/>
            <person name="Griffith-Jones S."/>
            <person name="Gwilliam R."/>
            <person name="Haas B.J."/>
            <person name="Haas H."/>
            <person name="Harris D.E."/>
            <person name="Horiuchi H."/>
            <person name="Huang J."/>
            <person name="Humphray S."/>
            <person name="Jimenez J."/>
            <person name="Keller N."/>
            <person name="Khouri H."/>
            <person name="Kitamoto K."/>
            <person name="Kobayashi T."/>
            <person name="Konzack S."/>
            <person name="Kulkarni R."/>
            <person name="Kumagai T."/>
            <person name="Lafton A."/>
            <person name="Latge J.-P."/>
            <person name="Li W."/>
            <person name="Lord A."/>
            <person name="Lu C."/>
            <person name="Majoros W.H."/>
            <person name="May G.S."/>
            <person name="Miller B.L."/>
            <person name="Mohamoud Y."/>
            <person name="Molina M."/>
            <person name="Monod M."/>
            <person name="Mouyna I."/>
            <person name="Mulligan S."/>
            <person name="Murphy L.D."/>
            <person name="O'Neil S."/>
            <person name="Paulsen I."/>
            <person name="Penalva M.A."/>
            <person name="Pertea M."/>
            <person name="Price C."/>
            <person name="Pritchard B.L."/>
            <person name="Quail M.A."/>
            <person name="Rabbinowitsch E."/>
            <person name="Rawlins N."/>
            <person name="Rajandream M.A."/>
            <person name="Reichard U."/>
            <person name="Renauld H."/>
            <person name="Robson G.D."/>
            <person name="Rodriguez de Cordoba S."/>
            <person name="Rodriguez-Pena J.M."/>
            <person name="Ronning C.M."/>
            <person name="Rutter S."/>
            <person name="Salzberg S.L."/>
            <person name="Sanchez M."/>
            <person name="Sanchez-Ferrero J.C."/>
            <person name="Saunders D."/>
            <person name="Seeger K."/>
            <person name="Squares R."/>
            <person name="Squares S."/>
            <person name="Takeuchi M."/>
            <person name="Tekaia F."/>
            <person name="Turner G."/>
            <person name="Vazquez de Aldana C.R."/>
            <person name="Weidman J."/>
            <person name="White O."/>
            <person name="Woodward J.R."/>
            <person name="Yu J.-H."/>
            <person name="Fraser C.M."/>
            <person name="Galagan J.E."/>
            <person name="Asai K."/>
            <person name="Machida M."/>
            <person name="Hall N."/>
            <person name="Barrell B.G."/>
            <person name="Denning D.W."/>
        </authorList>
    </citation>
    <scope>NUCLEOTIDE SEQUENCE [LARGE SCALE GENOMIC DNA]</scope>
    <source>
        <strain>ATCC MYA-4609 / CBS 101355 / FGSC A1100 / Af293</strain>
    </source>
</reference>
<reference key="2">
    <citation type="journal article" date="2012" name="PLoS ONE">
        <title>Trypacidin, a spore-borne toxin from Aspergillus fumigatus, is cytotoxic to lung cells.</title>
        <authorList>
            <person name="Gauthier T."/>
            <person name="Wang X."/>
            <person name="Sifuentes Dos Santos J."/>
            <person name="Fysikopoulos A."/>
            <person name="Tadrist S."/>
            <person name="Canlet C."/>
            <person name="Artigot M.P."/>
            <person name="Loiseau N."/>
            <person name="Oswald I.P."/>
            <person name="Puel O."/>
        </authorList>
    </citation>
    <scope>FUNCTION</scope>
    <scope>TISSUE SPECIFICITY</scope>
</reference>
<reference key="3">
    <citation type="journal article" date="2015" name="Appl. Microbiol. Biotechnol.">
        <title>Identification of the antiphagocytic trypacidin gene cluster in the human-pathogenic fungus Aspergillus fumigatus.</title>
        <authorList>
            <person name="Mattern D.J."/>
            <person name="Schoeler H."/>
            <person name="Weber J."/>
            <person name="Novohradska S."/>
            <person name="Kraibooj K."/>
            <person name="Dahse H.M."/>
            <person name="Hillmann F."/>
            <person name="Valiante V."/>
            <person name="Figge M.T."/>
            <person name="Brakhage A.A."/>
        </authorList>
    </citation>
    <scope>FUNCTION</scope>
    <scope>DISRUPTION PHENOTYPE</scope>
</reference>
<reference key="4">
    <citation type="journal article" date="2016" name="Environ. Microbiol.">
        <title>Redundant synthesis of a conidial polyketide by two distinct secondary metabolite clusters in Aspergillus fumigatus.</title>
        <authorList>
            <person name="Throckmorton K."/>
            <person name="Lim F.Y."/>
            <person name="Kontoyiannis D.P."/>
            <person name="Zheng W."/>
            <person name="Keller N.P."/>
        </authorList>
    </citation>
    <scope>FUNCTION</scope>
    <scope>DISRUPTION PHENOTYPE</scope>
    <scope>INDUCTION</scope>
</reference>
<sequence length="1782" mass="194340">MRPVDFTPSSESPTAEKGMKVVYFGNELPQDGIQGICRRLHTYTKDRRYPLLARFIEESTWAVHDEVRQLHAAQKALVSPFESVLHLAEQPELCRGPLCGSIEGVLLCVIQLGTFIGYYEDSPNEYTFDSANTYLTGLGLGLLASTAVSLSPTLADLPLAGAEVVRVAFRLGVLVADVSQNLQPADATGERDSWAYVIPNVAPKEAEEELAVIHTRENTPEASRIFISAISRTSVTISGPPARLRRLFRMSDFFRDRTFVALPVYGGLCHAKHIYNSQHARSVVQGPSIAALDTRFIARYPILSTGSGEPFPTATTATELFEHVMTEILTQAIEWENVIQGVVERAKLLSVSEVQVQVFRNSHPVHDLLSALETSLREGVEVAIKDLGPWITRTRDEERPPPRGTAQSKIAIVGMSCRMPSGATDTEKFWDILEQGLDVHRKIPPDRFDVDSHYDPAGKRVNASHTPYGCFIDEPGLFDAPFFNMSPREAQQTDPMQRLAIVTAYEALERAGYVANRTRSSNKHRMGTFYGQASDDYREVNSAQEISTYFIPGGCRAFGPGRINYFFKLWGPSFSIDTACSSSLATIQAACTALWNGDTDTVVAGGMNVLTNSDAFAGLSHGHFLTKTPNACKTWDCEADGYCRADGVASIVMKRLEDAEADNDNILGVILGAATNHSAEAISITHPHAGAQSCLSRQVLRSAGIDPMDVSYVEMHGTGTQAGDAEEIKSVSDVFAPAVKRRSSQQPVFIGAVKANVGHGEAVAGVTALVKVLLMFQKEAIPPHVGIKNSINPGFPKDLDQRNLRIPYEKKPWPRRPGRKRIAMVNNFSAAGGNSTLAIEEGPLRPKPAGAIDPRSSHLVTVSAKSKISLKGNLERLLSFLDAHPDVALSDLAYTTTARRHHHNHRVAVATSDIADLKAQLCKTLESDSVNTLQPISATGPPPIAFAFTGQGSSYKSWDLQLFQHSPYFRSQILHLDTLAQGQGFPSFVPAIDGSYPRDHAHCPVITQLALVCTEIALAKYWVSLGVTPDVVVGHSLGEYAALHIAGVLSASDAIFLVGQRACLLQERCQPSSHQMMAVRASLEQIEQFAGSLPYEIACVNGPREMVLSGTREEMAAVARLLEAEGFKCIVLEVAFAFHSAQMDPILDEFEALAASGVVFQAPNLPVISPLLSKVVFDEHTIDSVYMRRATRETVHFLSAMKMAHKISTIDDATVWVEIGPHPVCVNFVRSSLPSTSVTVPSFRRGEDNWVTLTSSLGILHCAGVPVDWNEFHQPFERALRLLDLPTYSWNEKTYWIQYQGNWALTKGNTFYDDEAPQTKALAGLASELRTSTVQQIIHEQYDGAAGSVVMQSDLMQPDFLAAAYGHKMNGRGVVTSSIHADIAFTLGEYLYKKLNPNQEPHMNIANLEVVKALVAQENTKSPQLIQVSASTDNIRSRQAHLKWHNVINGSIEEPFASATVYYEEASDWLASWRPATHLVQGRIHALEQLAEDGVANRFTRRMAYGLFASSLVDYADKYRGMQSVVLHELEAFADVVLTTEKGGTWTVPPYFIDSVAHLAGFIMNVSDANDTNANFCVTPGWSSMRFAAPLLPGSKYRSYVKMIPTVEDNNIYLGDVYILQDETIVGMVGGIKFRRYPRILLNRFFSAPDADARKSTPATSAPAPAPPAGSEALQPKAAPASTPAAPASADAPTTNGVKAAAEPDANSTAAKAIALVATEAGLGLSDLKDSASFSSLGIDSLMSLVISEKFRETLGVTVTGSLFLEYPTVGDLKSWLLEYYS</sequence>
<comment type="function">
    <text evidence="1 8 9 10">Non-reducing polyketide synthase; part of the gene cluster that mediates the biosynthesis of trypacidin, a mycotoxin with antiprotozoal activity and that plays a role in the infection process (PubMed:26242966, PubMed:26278536). The pathway begins with the synthesis of atrochrysone thioester by the polyketide synthase (PKS) tpcC (PubMed:26242966). The atrochrysone carboxyl ACP thioesterase tpcB then breaks the thioester bond and releases the atrochrysone carboxylic acid from tpcC (PubMed:26242966). The decarboxylase tpcK converts atrochrysone carboxylic acid to atrochrysone which is further reduced into emodin anthrone (PubMed:26242966). The next step is performed by the emodin anthrone oxygenase tpcL that catalyzes the oxidation of emodin anthrone to emodin (PubMed:26242966). Emodin O-methyltransferase encoded by tpcA catalyzes methylation of the 8-hydroxy group of emodin to form questin (PubMed:26242966). Ring cleavage of questin by questin oxidase tpcI leads to desmethylsulochrin via several intermediates including questin epoxide (By similarity). Another methylation step catalyzed by tpcM leads to the formation of sulochrin which is further converted to monomethylsulfochrin by tpcH. Finally, the tpcJ catalyzes the conversion of monomethylsulfochrin to trypacidin (PubMed:26242966). Trypacidin is toxic for human pulmonary and bronchial epithelial cells by initiating the intracellular formation of nitric oxide (NO) and hydrogen peroxide (H(2)O(2)), thus triggering host necrotic cell death (PubMed:22319557). The trypacidin pathway is also able to produce endocrocin via a distinct route from the endocrocin Enc pathway (PubMed:26242966).</text>
</comment>
<comment type="catalytic activity">
    <reaction evidence="14">
        <text>holo-[ACP] + 8 malonyl-CoA + 8 H(+) = atrochrysone carboxyl-[ACP] + 8 CO2 + 8 CoA + 2 H2O</text>
        <dbReference type="Rhea" id="RHEA:64232"/>
        <dbReference type="Rhea" id="RHEA-COMP:9685"/>
        <dbReference type="Rhea" id="RHEA-COMP:16552"/>
        <dbReference type="ChEBI" id="CHEBI:15377"/>
        <dbReference type="ChEBI" id="CHEBI:15378"/>
        <dbReference type="ChEBI" id="CHEBI:16526"/>
        <dbReference type="ChEBI" id="CHEBI:57287"/>
        <dbReference type="ChEBI" id="CHEBI:57384"/>
        <dbReference type="ChEBI" id="CHEBI:64479"/>
        <dbReference type="ChEBI" id="CHEBI:149712"/>
    </reaction>
    <physiologicalReaction direction="left-to-right" evidence="14">
        <dbReference type="Rhea" id="RHEA:64233"/>
    </physiologicalReaction>
</comment>
<comment type="pathway">
    <text evidence="9 10">Secondary metabolite biosynthesis.</text>
</comment>
<comment type="tissue specificity">
    <text evidence="13">Specifically expressed in conidia (PubMed:22319557).</text>
</comment>
<comment type="induction">
    <text evidence="9">Expression is positively regulated by the transcription factors brlA and laeA (PubMed:26242966).</text>
</comment>
<comment type="domain">
    <text evidence="2">Multidomain protein; including a starter unit:ACP transacylase (SAT) that selects the starter unit; a ketosynthase (KS) that catalyzes repeated decarboxylative condensation to elongate the polyketide backbone; a malonyl-CoA:ACP transacylase (MAT) that selects and transfers the extender unit malonyl-CoA; a product template (PT) domain that controls the immediate cyclization regioselectivity of the reactive polyketide backbone; and an acyl-carrier protein (ACP) that serves as the tether of the growing and completed polyketide via its phosphopantetheinyl arm (By similarity).</text>
</comment>
<comment type="disruption phenotype">
    <text evidence="9 10">Impairs the production of trypacidin and pathway intermediates including questin (PubMed:26242966, PubMed:26278536). Leads to enhanced phagocytosis ratio by macrophages and amoebae (PubMed:26278536).</text>
</comment>
<gene>
    <name evidence="11" type="primary">tpcC</name>
    <name evidence="12" type="synonym">tynC</name>
    <name type="ORF">AFUA_4G14560</name>
</gene>
<protein>
    <recommendedName>
        <fullName evidence="14">Atrochrysone carboxylic acid synthase</fullName>
        <shortName evidence="14">ACAS</shortName>
        <ecNumber evidence="14">2.3.1.-</ecNumber>
    </recommendedName>
    <alternativeName>
        <fullName evidence="11">Non-reducing polyketide synthase tpcC</fullName>
    </alternativeName>
    <alternativeName>
        <fullName evidence="11">Trypacidin synthesis protein C</fullName>
    </alternativeName>
</protein>
<name>TPCC_ASPFU</name>
<accession>Q4WQZ5</accession>
<feature type="chain" id="PRO_0000437050" description="Atrochrysone carboxylic acid synthase">
    <location>
        <begin position="1"/>
        <end position="1782"/>
    </location>
</feature>
<feature type="domain" description="Ketosynthase family 3 (KS3)" evidence="5">
    <location>
        <begin position="407"/>
        <end position="841"/>
    </location>
</feature>
<feature type="domain" description="PKS/mFAS DH" evidence="6">
    <location>
        <begin position="1335"/>
        <end position="1643"/>
    </location>
</feature>
<feature type="domain" description="Carrier" evidence="4">
    <location>
        <begin position="1704"/>
        <end position="1781"/>
    </location>
</feature>
<feature type="region of interest" description="N-terminal acylcarrier protein transacylase domain (SAT)" evidence="3">
    <location>
        <begin position="41"/>
        <end position="270"/>
    </location>
</feature>
<feature type="region of interest" description="Malonyl-CoA:ACP transacylase (MAT) domain" evidence="3">
    <location>
        <begin position="946"/>
        <end position="1266"/>
    </location>
</feature>
<feature type="region of interest" description="Product template (PT) domain" evidence="3">
    <location>
        <begin position="1331"/>
        <end position="1648"/>
    </location>
</feature>
<feature type="region of interest" description="N-terminal hotdog fold" evidence="6">
    <location>
        <begin position="1335"/>
        <end position="1468"/>
    </location>
</feature>
<feature type="region of interest" description="C-terminal hotdog fold" evidence="6">
    <location>
        <begin position="1495"/>
        <end position="1643"/>
    </location>
</feature>
<feature type="region of interest" description="Disordered" evidence="7">
    <location>
        <begin position="1653"/>
        <end position="1703"/>
    </location>
</feature>
<feature type="compositionally biased region" description="Low complexity" evidence="7">
    <location>
        <begin position="1678"/>
        <end position="1695"/>
    </location>
</feature>
<feature type="active site" description="For beta-ketoacyl synthase activity" evidence="5">
    <location>
        <position position="580"/>
    </location>
</feature>
<feature type="active site" description="For beta-ketoacyl synthase activity" evidence="5">
    <location>
        <position position="716"/>
    </location>
</feature>
<feature type="active site" description="For beta-ketoacyl synthase activity" evidence="5">
    <location>
        <position position="759"/>
    </location>
</feature>
<feature type="active site" description="Proton acceptor; for dehydratase activity" evidence="6">
    <location>
        <position position="1367"/>
    </location>
</feature>
<feature type="active site" description="Proton donor; for dehydratase activity" evidence="6">
    <location>
        <position position="1554"/>
    </location>
</feature>
<feature type="modified residue" description="O-(pantetheine 4'-phosphoryl)serine" evidence="4">
    <location>
        <position position="1741"/>
    </location>
</feature>
<proteinExistence type="evidence at transcript level"/>